<sequence>MNFVLSLIFLALILKGVQCEVHLVESGGGLVKPGGSLKLSCVVSGFTFNKYAMSWVRQTPEKRLEWVATISSGGLYTYYPDSVKGRFTISRDNAGNTLYLQMSSLRSEDTAMYYCAR</sequence>
<accession>P18529</accession>
<keyword id="KW-0002">3D-structure</keyword>
<keyword id="KW-1064">Adaptive immunity</keyword>
<keyword id="KW-1015">Disulfide bond</keyword>
<keyword id="KW-0391">Immunity</keyword>
<keyword id="KW-1280">Immunoglobulin</keyword>
<keyword id="KW-1185">Reference proteome</keyword>
<keyword id="KW-0732">Signal</keyword>
<protein>
    <recommendedName>
        <fullName>Ig heavy chain V region 5-76</fullName>
    </recommendedName>
</protein>
<dbReference type="PIR" id="JT0506">
    <property type="entry name" value="HVMS57"/>
</dbReference>
<dbReference type="PDB" id="1BFV">
    <property type="method" value="X-ray"/>
    <property type="resolution" value="2.10 A"/>
    <property type="chains" value="H=21-117"/>
</dbReference>
<dbReference type="PDB" id="1I8I">
    <property type="method" value="X-ray"/>
    <property type="resolution" value="2.40 A"/>
    <property type="chains" value="B=21-117"/>
</dbReference>
<dbReference type="PDB" id="1I8K">
    <property type="method" value="X-ray"/>
    <property type="resolution" value="1.80 A"/>
    <property type="chains" value="B=21-117"/>
</dbReference>
<dbReference type="PDBsum" id="1BFV"/>
<dbReference type="PDBsum" id="1I8I"/>
<dbReference type="PDBsum" id="1I8K"/>
<dbReference type="SMR" id="P18529"/>
<dbReference type="FunCoup" id="P18529">
    <property type="interactions" value="644"/>
</dbReference>
<dbReference type="InParanoid" id="P18529"/>
<dbReference type="EvolutionaryTrace" id="P18529"/>
<dbReference type="Proteomes" id="UP000000589">
    <property type="component" value="Unplaced"/>
</dbReference>
<dbReference type="RNAct" id="P18529">
    <property type="molecule type" value="protein"/>
</dbReference>
<dbReference type="GO" id="GO:0005576">
    <property type="term" value="C:extracellular region"/>
    <property type="evidence" value="ECO:0007669"/>
    <property type="project" value="UniProtKB-ARBA"/>
</dbReference>
<dbReference type="GO" id="GO:0019814">
    <property type="term" value="C:immunoglobulin complex"/>
    <property type="evidence" value="ECO:0007669"/>
    <property type="project" value="UniProtKB-KW"/>
</dbReference>
<dbReference type="GO" id="GO:0003823">
    <property type="term" value="F:antigen binding"/>
    <property type="evidence" value="ECO:0000318"/>
    <property type="project" value="GO_Central"/>
</dbReference>
<dbReference type="GO" id="GO:0016064">
    <property type="term" value="P:immunoglobulin mediated immune response"/>
    <property type="evidence" value="ECO:0000318"/>
    <property type="project" value="GO_Central"/>
</dbReference>
<dbReference type="FunFam" id="2.60.40.10:FF:001423">
    <property type="entry name" value="Ig heavy chain V region 5-84"/>
    <property type="match status" value="1"/>
</dbReference>
<dbReference type="Gene3D" id="2.60.40.10">
    <property type="entry name" value="Immunoglobulins"/>
    <property type="match status" value="1"/>
</dbReference>
<dbReference type="InterPro" id="IPR007110">
    <property type="entry name" value="Ig-like_dom"/>
</dbReference>
<dbReference type="InterPro" id="IPR036179">
    <property type="entry name" value="Ig-like_dom_sf"/>
</dbReference>
<dbReference type="InterPro" id="IPR013783">
    <property type="entry name" value="Ig-like_fold"/>
</dbReference>
<dbReference type="InterPro" id="IPR013106">
    <property type="entry name" value="Ig_V-set"/>
</dbReference>
<dbReference type="InterPro" id="IPR050199">
    <property type="entry name" value="IgHV"/>
</dbReference>
<dbReference type="PANTHER" id="PTHR23266">
    <property type="entry name" value="IMMUNOGLOBULIN HEAVY CHAIN"/>
    <property type="match status" value="1"/>
</dbReference>
<dbReference type="Pfam" id="PF07686">
    <property type="entry name" value="V-set"/>
    <property type="match status" value="1"/>
</dbReference>
<dbReference type="SMART" id="SM00406">
    <property type="entry name" value="IGv"/>
    <property type="match status" value="1"/>
</dbReference>
<dbReference type="SUPFAM" id="SSF48726">
    <property type="entry name" value="Immunoglobulin"/>
    <property type="match status" value="1"/>
</dbReference>
<dbReference type="PROSITE" id="PS50835">
    <property type="entry name" value="IG_LIKE"/>
    <property type="match status" value="1"/>
</dbReference>
<proteinExistence type="evidence at protein level"/>
<evidence type="ECO:0000255" key="1">
    <source>
        <dbReference type="PROSITE-ProRule" id="PRU00114"/>
    </source>
</evidence>
<evidence type="ECO:0007829" key="2">
    <source>
        <dbReference type="PDB" id="1I8K"/>
    </source>
</evidence>
<name>HVM58_MOUSE</name>
<comment type="miscellaneous">
    <text>This sequence belongs to the VH7183 subfamily.</text>
</comment>
<organism>
    <name type="scientific">Mus musculus</name>
    <name type="common">Mouse</name>
    <dbReference type="NCBI Taxonomy" id="10090"/>
    <lineage>
        <taxon>Eukaryota</taxon>
        <taxon>Metazoa</taxon>
        <taxon>Chordata</taxon>
        <taxon>Craniata</taxon>
        <taxon>Vertebrata</taxon>
        <taxon>Euteleostomi</taxon>
        <taxon>Mammalia</taxon>
        <taxon>Eutheria</taxon>
        <taxon>Euarchontoglires</taxon>
        <taxon>Glires</taxon>
        <taxon>Rodentia</taxon>
        <taxon>Myomorpha</taxon>
        <taxon>Muroidea</taxon>
        <taxon>Muridae</taxon>
        <taxon>Murinae</taxon>
        <taxon>Mus</taxon>
        <taxon>Mus</taxon>
    </lineage>
</organism>
<reference key="1">
    <citation type="journal article" date="1989" name="J. Exp. Med.">
        <title>Early onset of somatic mutation in immunoglobulin VH genes during the primary immune response.</title>
        <authorList>
            <person name="Levy N.S."/>
            <person name="Malipiero U.V."/>
            <person name="Lebecque S.G."/>
            <person name="Gearhart P.J."/>
        </authorList>
    </citation>
    <scope>NUCLEOTIDE SEQUENCE</scope>
    <source>
        <strain>BALB/cJ</strain>
    </source>
</reference>
<feature type="signal peptide">
    <location>
        <begin position="1"/>
        <end position="19"/>
    </location>
</feature>
<feature type="chain" id="PRO_0000015239" description="Ig heavy chain V region 5-76">
    <location>
        <begin position="20"/>
        <end position="117"/>
    </location>
</feature>
<feature type="region of interest" description="Framework-1">
    <location>
        <begin position="20"/>
        <end position="49"/>
    </location>
</feature>
<feature type="region of interest" description="Complementarity-determining-1">
    <location>
        <begin position="50"/>
        <end position="54"/>
    </location>
</feature>
<feature type="region of interest" description="Framework-2">
    <location>
        <begin position="55"/>
        <end position="68"/>
    </location>
</feature>
<feature type="region of interest" description="Complementarity-determining-2">
    <location>
        <begin position="69"/>
        <end position="85"/>
    </location>
</feature>
<feature type="region of interest" description="Framework-3">
    <location>
        <begin position="86"/>
        <end position="117"/>
    </location>
</feature>
<feature type="disulfide bond" evidence="1">
    <location>
        <begin position="41"/>
        <end position="115"/>
    </location>
</feature>
<feature type="non-terminal residue">
    <location>
        <position position="117"/>
    </location>
</feature>
<feature type="strand" evidence="2">
    <location>
        <begin position="22"/>
        <end position="26"/>
    </location>
</feature>
<feature type="strand" evidence="2">
    <location>
        <begin position="29"/>
        <end position="31"/>
    </location>
</feature>
<feature type="strand" evidence="2">
    <location>
        <begin position="37"/>
        <end position="46"/>
    </location>
</feature>
<feature type="helix" evidence="2">
    <location>
        <begin position="48"/>
        <end position="50"/>
    </location>
</feature>
<feature type="strand" evidence="2">
    <location>
        <begin position="53"/>
        <end position="58"/>
    </location>
</feature>
<feature type="strand" evidence="2">
    <location>
        <begin position="64"/>
        <end position="70"/>
    </location>
</feature>
<feature type="strand" evidence="2">
    <location>
        <begin position="77"/>
        <end position="79"/>
    </location>
</feature>
<feature type="turn" evidence="2">
    <location>
        <begin position="81"/>
        <end position="86"/>
    </location>
</feature>
<feature type="strand" evidence="2">
    <location>
        <begin position="87"/>
        <end position="92"/>
    </location>
</feature>
<feature type="helix" evidence="2">
    <location>
        <begin position="93"/>
        <end position="95"/>
    </location>
</feature>
<feature type="strand" evidence="2">
    <location>
        <begin position="97"/>
        <end position="102"/>
    </location>
</feature>
<feature type="helix" evidence="2">
    <location>
        <begin position="107"/>
        <end position="109"/>
    </location>
</feature>
<feature type="strand" evidence="2">
    <location>
        <begin position="111"/>
        <end position="117"/>
    </location>
</feature>